<name>MRS2_PLAF7</name>
<proteinExistence type="evidence at protein level"/>
<protein>
    <recommendedName>
        <fullName>Mitochondrial inner membrane magnesium transporter MIT1</fullName>
    </recommendedName>
</protein>
<dbReference type="EMBL" id="LN999945">
    <property type="protein sequence ID" value="CZT98865.1"/>
    <property type="molecule type" value="Genomic_DNA"/>
</dbReference>
<dbReference type="RefSeq" id="XP_001347881.2">
    <property type="nucleotide sequence ID" value="XM_001347845.2"/>
</dbReference>
<dbReference type="SMR" id="Q8IIG4"/>
<dbReference type="FunCoup" id="Q8IIG4">
    <property type="interactions" value="693"/>
</dbReference>
<dbReference type="TCDB" id="1.A.35.5.8">
    <property type="family name" value="the cora metal ion transporter (mit) family"/>
</dbReference>
<dbReference type="PaxDb" id="5833-PF11_0210"/>
<dbReference type="EnsemblProtists" id="CZT98865">
    <property type="protein sequence ID" value="CZT98865"/>
    <property type="gene ID" value="PF3D7_1120300"/>
</dbReference>
<dbReference type="GeneID" id="810757"/>
<dbReference type="KEGG" id="pfa:PF3D7_1120300"/>
<dbReference type="VEuPathDB" id="PlasmoDB:PF3D7_1120300"/>
<dbReference type="HOGENOM" id="CLU_633836_0_0_1"/>
<dbReference type="InParanoid" id="Q8IIG4"/>
<dbReference type="OMA" id="LVRKNMI"/>
<dbReference type="OrthoDB" id="10251508at2759"/>
<dbReference type="PhylomeDB" id="Q8IIG4"/>
<dbReference type="Proteomes" id="UP000001450">
    <property type="component" value="Chromosome 11"/>
</dbReference>
<dbReference type="GO" id="GO:0005743">
    <property type="term" value="C:mitochondrial inner membrane"/>
    <property type="evidence" value="ECO:0007669"/>
    <property type="project" value="UniProtKB-SubCell"/>
</dbReference>
<dbReference type="GO" id="GO:0015095">
    <property type="term" value="F:magnesium ion transmembrane transporter activity"/>
    <property type="evidence" value="ECO:0000318"/>
    <property type="project" value="GO_Central"/>
</dbReference>
<dbReference type="GO" id="GO:0015693">
    <property type="term" value="P:magnesium ion transport"/>
    <property type="evidence" value="ECO:0000318"/>
    <property type="project" value="GO_Central"/>
</dbReference>
<dbReference type="CDD" id="cd12823">
    <property type="entry name" value="Mrs2_Mfm1p-like"/>
    <property type="match status" value="1"/>
</dbReference>
<dbReference type="FunFam" id="1.20.58.340:FF:000026">
    <property type="entry name" value="Metal ion channel-Mg2+, Co2+ and Ni2"/>
    <property type="match status" value="1"/>
</dbReference>
<dbReference type="FunFam" id="2.40.128.330:FF:000006">
    <property type="entry name" value="Metal ion channel-Mg2+, Co2+ and Ni2"/>
    <property type="match status" value="1"/>
</dbReference>
<dbReference type="Gene3D" id="2.40.128.330">
    <property type="match status" value="1"/>
</dbReference>
<dbReference type="Gene3D" id="1.20.58.340">
    <property type="entry name" value="Magnesium transport protein CorA, transmembrane region"/>
    <property type="match status" value="1"/>
</dbReference>
<dbReference type="InterPro" id="IPR039204">
    <property type="entry name" value="MRS2-like"/>
</dbReference>
<dbReference type="PANTHER" id="PTHR13890:SF0">
    <property type="entry name" value="MAGNESIUM TRANSPORTER MRS2 HOMOLOG, MITOCHONDRIAL"/>
    <property type="match status" value="1"/>
</dbReference>
<dbReference type="PANTHER" id="PTHR13890">
    <property type="entry name" value="RNA SPLICING PROTEIN MRS2, MITOCHONDRIAL"/>
    <property type="match status" value="1"/>
</dbReference>
<dbReference type="Pfam" id="PF22099">
    <property type="entry name" value="MRS2-like"/>
    <property type="match status" value="1"/>
</dbReference>
<accession>Q8IIG4</accession>
<accession>A0A143ZZ84</accession>
<reference key="1">
    <citation type="journal article" date="2002" name="Nature">
        <title>Genome sequence of the human malaria parasite Plasmodium falciparum.</title>
        <authorList>
            <person name="Gardner M.J."/>
            <person name="Hall N."/>
            <person name="Fung E."/>
            <person name="White O."/>
            <person name="Berriman M."/>
            <person name="Hyman R.W."/>
            <person name="Carlton J.M."/>
            <person name="Pain A."/>
            <person name="Nelson K.E."/>
            <person name="Bowman S."/>
            <person name="Paulsen I.T."/>
            <person name="James K.D."/>
            <person name="Eisen J.A."/>
            <person name="Rutherford K.M."/>
            <person name="Salzberg S.L."/>
            <person name="Craig A."/>
            <person name="Kyes S."/>
            <person name="Chan M.-S."/>
            <person name="Nene V."/>
            <person name="Shallom S.J."/>
            <person name="Suh B."/>
            <person name="Peterson J."/>
            <person name="Angiuoli S."/>
            <person name="Pertea M."/>
            <person name="Allen J."/>
            <person name="Selengut J."/>
            <person name="Haft D."/>
            <person name="Mather M.W."/>
            <person name="Vaidya A.B."/>
            <person name="Martin D.M.A."/>
            <person name="Fairlamb A.H."/>
            <person name="Fraunholz M.J."/>
            <person name="Roos D.S."/>
            <person name="Ralph S.A."/>
            <person name="McFadden G.I."/>
            <person name="Cummings L.M."/>
            <person name="Subramanian G.M."/>
            <person name="Mungall C."/>
            <person name="Venter J.C."/>
            <person name="Carucci D.J."/>
            <person name="Hoffman S.L."/>
            <person name="Newbold C."/>
            <person name="Davis R.W."/>
            <person name="Fraser C.M."/>
            <person name="Barrell B.G."/>
        </authorList>
    </citation>
    <scope>NUCLEOTIDE SEQUENCE [LARGE SCALE GENOMIC DNA]</scope>
    <source>
        <strain>3D7</strain>
    </source>
</reference>
<reference evidence="5" key="2">
    <citation type="journal article" date="2007" name="PLoS ONE">
        <title>Rapid identification of malaria vaccine candidates based on alpha-helical coiled coil protein motif.</title>
        <authorList>
            <person name="Villard V."/>
            <person name="Agak G.W."/>
            <person name="Frank G."/>
            <person name="Jafarshad A."/>
            <person name="Servis C."/>
            <person name="Nebie I."/>
            <person name="Sirima S.B."/>
            <person name="Felger I."/>
            <person name="Arevalo-Herrera M."/>
            <person name="Herrera S."/>
            <person name="Heitz F."/>
            <person name="Baecker V."/>
            <person name="Druilhe P."/>
            <person name="Kajava A.V."/>
            <person name="Corradin G."/>
        </authorList>
    </citation>
    <scope>SYNTHESIS OF 347-387</scope>
    <scope>POSSIBLE CANDIDATE MALARIA EPITOPE</scope>
</reference>
<feature type="transit peptide" description="Mitochondrion" evidence="3">
    <location>
        <begin position="1"/>
        <end status="unknown"/>
    </location>
</feature>
<feature type="chain" id="PRO_0000364019" description="Mitochondrial inner membrane magnesium transporter MIT1">
    <location>
        <begin status="unknown"/>
        <end position="529"/>
    </location>
</feature>
<feature type="topological domain" description="Mitochondrial matrix" evidence="3">
    <location>
        <begin status="unknown"/>
        <end position="455"/>
    </location>
</feature>
<feature type="transmembrane region" description="Helical" evidence="3">
    <location>
        <begin position="456"/>
        <end position="476"/>
    </location>
</feature>
<feature type="topological domain" description="Mitochondrial intermembrane" evidence="3">
    <location>
        <begin position="477"/>
        <end position="492"/>
    </location>
</feature>
<feature type="transmembrane region" description="Helical" evidence="3">
    <location>
        <begin position="493"/>
        <end position="513"/>
    </location>
</feature>
<feature type="topological domain" description="Mitochondrial matrix" evidence="3">
    <location>
        <begin position="514"/>
        <end position="529"/>
    </location>
</feature>
<feature type="coiled-coil region" evidence="3">
    <location>
        <begin position="336"/>
        <end position="388"/>
    </location>
</feature>
<feature type="coiled-coil region" evidence="3">
    <location>
        <begin position="416"/>
        <end position="450"/>
    </location>
</feature>
<organism>
    <name type="scientific">Plasmodium falciparum (isolate 3D7)</name>
    <dbReference type="NCBI Taxonomy" id="36329"/>
    <lineage>
        <taxon>Eukaryota</taxon>
        <taxon>Sar</taxon>
        <taxon>Alveolata</taxon>
        <taxon>Apicomplexa</taxon>
        <taxon>Aconoidasida</taxon>
        <taxon>Haemosporida</taxon>
        <taxon>Plasmodiidae</taxon>
        <taxon>Plasmodium</taxon>
        <taxon>Plasmodium (Laverania)</taxon>
    </lineage>
</organism>
<comment type="function">
    <text evidence="1 2">Mitochondrial inner membrane magnesium transporter required for mitochondrial magnesium homeostasis (By similarity). Involved in the development of the sporozoite in the mosquito vector midgut (By similarity).</text>
</comment>
<comment type="subcellular location">
    <subcellularLocation>
        <location evidence="2">Mitochondrion inner membrane</location>
        <topology evidence="2">Multi-pass membrane protein</topology>
    </subcellularLocation>
</comment>
<comment type="biotechnology">
    <text evidence="4">Possible candidate for an effective malaria vaccine as determined by epitope response in sera.</text>
</comment>
<comment type="similarity">
    <text evidence="5">Belongs to the CorA metal ion transporter (MIT) (TC 1.A.35) family.</text>
</comment>
<gene>
    <name evidence="1" type="primary">MIT1</name>
    <name type="ORF">PF11_0210</name>
    <name type="ORF">PF3D7_1120300</name>
</gene>
<keyword id="KW-0175">Coiled coil</keyword>
<keyword id="KW-0406">Ion transport</keyword>
<keyword id="KW-0460">Magnesium</keyword>
<keyword id="KW-0472">Membrane</keyword>
<keyword id="KW-0496">Mitochondrion</keyword>
<keyword id="KW-0999">Mitochondrion inner membrane</keyword>
<keyword id="KW-1185">Reference proteome</keyword>
<keyword id="KW-0809">Transit peptide</keyword>
<keyword id="KW-0812">Transmembrane</keyword>
<keyword id="KW-1133">Transmembrane helix</keyword>
<keyword id="KW-0813">Transport</keyword>
<sequence length="529" mass="63252">MFVWTHINKYTSRYINRYILKFTRYESLRLCMLNFTSTIKNENKIYSKKNFNNVLMQNIKITEDEEIICEQFFFSKYNLPYVLKIPFSDLRLIDTCNNNHNPTILIRKDMILLRTGFLSCVIRYNELWLFEPREPLVIKATNLIKQNLKIIYGFKGDMSSGVEIPLNELKDEKCQENVNMYEKNIRNDLYSTYEKNISDDINDAKQKNMCSDINNIWSNHIKIDKKRIISGNYSRLNRNNIWENDREINKKDIFNIKEKKNMNENDDICNKIKIVGKEELNNNIKEDINYLNVENNFYRYKGNISFEFLCLDICMQLSIKEYENYLDTINITLRQKIQLQQKKEENIEINMLTNNLLREMMKIKNKLQKLSNLLNALRSNIEKILKNETDMKNMYLTTLNKISINKIKDYSDLEILLETHLQLTDELSGELENMEEKITHYEELMRLNLDYNRNKFILLNAKISFSTLFCSICAVITSLFGMNLKNFIEHNDYAFFIVSIFITSWSIVGIYFTKNINTLLRFFDKYNVK</sequence>
<evidence type="ECO:0000250" key="1">
    <source>
        <dbReference type="UniProtKB" id="A0A509AK04"/>
    </source>
</evidence>
<evidence type="ECO:0000250" key="2">
    <source>
        <dbReference type="UniProtKB" id="Q01926"/>
    </source>
</evidence>
<evidence type="ECO:0000255" key="3"/>
<evidence type="ECO:0000269" key="4">
    <source>
    </source>
</evidence>
<evidence type="ECO:0000305" key="5"/>